<proteinExistence type="inferred from homology"/>
<evidence type="ECO:0000255" key="1">
    <source>
        <dbReference type="HAMAP-Rule" id="MF_00145"/>
    </source>
</evidence>
<protein>
    <recommendedName>
        <fullName evidence="1">Phosphoglycerate kinase</fullName>
        <ecNumber evidence="1">2.7.2.3</ecNumber>
    </recommendedName>
</protein>
<organism>
    <name type="scientific">Treponema pallidum subsp. pallidum (strain SS14)</name>
    <dbReference type="NCBI Taxonomy" id="455434"/>
    <lineage>
        <taxon>Bacteria</taxon>
        <taxon>Pseudomonadati</taxon>
        <taxon>Spirochaetota</taxon>
        <taxon>Spirochaetia</taxon>
        <taxon>Spirochaetales</taxon>
        <taxon>Treponemataceae</taxon>
        <taxon>Treponema</taxon>
    </lineage>
</organism>
<keyword id="KW-0067">ATP-binding</keyword>
<keyword id="KW-0963">Cytoplasm</keyword>
<keyword id="KW-0324">Glycolysis</keyword>
<keyword id="KW-0418">Kinase</keyword>
<keyword id="KW-0547">Nucleotide-binding</keyword>
<keyword id="KW-0808">Transferase</keyword>
<accession>B2S3D0</accession>
<gene>
    <name evidence="1" type="primary">pgk</name>
    <name type="ordered locus">TPASS_0538</name>
</gene>
<sequence>MMLRTCKDVTMRGERVVVRVDFNVPMRDGMVQDDTRVTAAVPTLRYIIEQGPRHVVLISHLGDPTRDADKAEGNAKKDGCPFDRHAFINGKHRLKPVADCLAKKLGVPVHFAPSCVGQREFIEGLPDGSVVLLENVRFHPEETSGDAKVQEQFARELAQYGDIFVNDAFGTAHREHASTVVLPRLMRRRVAGLLIEREVRYLEPMVCNPKVPMVAVVGGAKVSSKIAVLESLLRTSTALIIGGGMAYTFLKAQGVGVGTSLVEDDFIDTARMLLQKAQSGGVSVVLPVDHVCASTFCADAQPVAVDDVHIPMHLMGMDVGPRTLEQYRAHLKGVSSVLWNGPVGVFEFDAFAHGTRVLAQLIAEATDAGATSVVGGGDSIAAVSKFGLASRMSHVSTGGGASLKLFEGKVLPGISCLET</sequence>
<dbReference type="EC" id="2.7.2.3" evidence="1"/>
<dbReference type="EMBL" id="CP000805">
    <property type="protein sequence ID" value="ACD70959.1"/>
    <property type="molecule type" value="Genomic_DNA"/>
</dbReference>
<dbReference type="SMR" id="B2S3D0"/>
<dbReference type="KEGG" id="tpp:TPASS_0538"/>
<dbReference type="PATRIC" id="fig|455434.6.peg.536"/>
<dbReference type="UniPathway" id="UPA00109">
    <property type="reaction ID" value="UER00185"/>
</dbReference>
<dbReference type="Proteomes" id="UP000001202">
    <property type="component" value="Chromosome"/>
</dbReference>
<dbReference type="GO" id="GO:0005829">
    <property type="term" value="C:cytosol"/>
    <property type="evidence" value="ECO:0007669"/>
    <property type="project" value="TreeGrafter"/>
</dbReference>
<dbReference type="GO" id="GO:0043531">
    <property type="term" value="F:ADP binding"/>
    <property type="evidence" value="ECO:0007669"/>
    <property type="project" value="TreeGrafter"/>
</dbReference>
<dbReference type="GO" id="GO:0005524">
    <property type="term" value="F:ATP binding"/>
    <property type="evidence" value="ECO:0007669"/>
    <property type="project" value="UniProtKB-KW"/>
</dbReference>
<dbReference type="GO" id="GO:0004618">
    <property type="term" value="F:phosphoglycerate kinase activity"/>
    <property type="evidence" value="ECO:0007669"/>
    <property type="project" value="UniProtKB-UniRule"/>
</dbReference>
<dbReference type="GO" id="GO:0006094">
    <property type="term" value="P:gluconeogenesis"/>
    <property type="evidence" value="ECO:0007669"/>
    <property type="project" value="TreeGrafter"/>
</dbReference>
<dbReference type="GO" id="GO:0006096">
    <property type="term" value="P:glycolytic process"/>
    <property type="evidence" value="ECO:0007669"/>
    <property type="project" value="UniProtKB-UniRule"/>
</dbReference>
<dbReference type="CDD" id="cd00318">
    <property type="entry name" value="Phosphoglycerate_kinase"/>
    <property type="match status" value="1"/>
</dbReference>
<dbReference type="FunFam" id="3.40.50.1260:FF:000007">
    <property type="entry name" value="Phosphoglycerate kinase"/>
    <property type="match status" value="1"/>
</dbReference>
<dbReference type="Gene3D" id="3.40.50.1260">
    <property type="entry name" value="Phosphoglycerate kinase, N-terminal domain"/>
    <property type="match status" value="2"/>
</dbReference>
<dbReference type="HAMAP" id="MF_00145">
    <property type="entry name" value="Phosphoglyc_kinase"/>
    <property type="match status" value="1"/>
</dbReference>
<dbReference type="InterPro" id="IPR001576">
    <property type="entry name" value="Phosphoglycerate_kinase"/>
</dbReference>
<dbReference type="InterPro" id="IPR015911">
    <property type="entry name" value="Phosphoglycerate_kinase_CS"/>
</dbReference>
<dbReference type="InterPro" id="IPR015824">
    <property type="entry name" value="Phosphoglycerate_kinase_N"/>
</dbReference>
<dbReference type="InterPro" id="IPR036043">
    <property type="entry name" value="Phosphoglycerate_kinase_sf"/>
</dbReference>
<dbReference type="PANTHER" id="PTHR11406">
    <property type="entry name" value="PHOSPHOGLYCERATE KINASE"/>
    <property type="match status" value="1"/>
</dbReference>
<dbReference type="PANTHER" id="PTHR11406:SF23">
    <property type="entry name" value="PHOSPHOGLYCERATE KINASE 1, CHLOROPLASTIC-RELATED"/>
    <property type="match status" value="1"/>
</dbReference>
<dbReference type="Pfam" id="PF00162">
    <property type="entry name" value="PGK"/>
    <property type="match status" value="1"/>
</dbReference>
<dbReference type="PIRSF" id="PIRSF000724">
    <property type="entry name" value="Pgk"/>
    <property type="match status" value="1"/>
</dbReference>
<dbReference type="PRINTS" id="PR00477">
    <property type="entry name" value="PHGLYCKINASE"/>
</dbReference>
<dbReference type="SUPFAM" id="SSF53748">
    <property type="entry name" value="Phosphoglycerate kinase"/>
    <property type="match status" value="1"/>
</dbReference>
<dbReference type="PROSITE" id="PS00111">
    <property type="entry name" value="PGLYCERATE_KINASE"/>
    <property type="match status" value="1"/>
</dbReference>
<reference key="1">
    <citation type="journal article" date="2008" name="BMC Microbiol.">
        <title>Complete genome sequence of Treponema pallidum ssp. pallidum strain SS14 determined with oligonucleotide arrays.</title>
        <authorList>
            <person name="Matejkova P."/>
            <person name="Strouhal M."/>
            <person name="Smajs D."/>
            <person name="Norris S.J."/>
            <person name="Palzkill T."/>
            <person name="Petrosino J.F."/>
            <person name="Sodergren E."/>
            <person name="Norton J.E."/>
            <person name="Singh J."/>
            <person name="Richmond T.A."/>
            <person name="Molla M.N."/>
            <person name="Albert T.J."/>
            <person name="Weinstock G.M."/>
        </authorList>
    </citation>
    <scope>NUCLEOTIDE SEQUENCE [LARGE SCALE GENOMIC DNA]</scope>
    <source>
        <strain>SS14</strain>
    </source>
</reference>
<comment type="catalytic activity">
    <reaction evidence="1">
        <text>(2R)-3-phosphoglycerate + ATP = (2R)-3-phospho-glyceroyl phosphate + ADP</text>
        <dbReference type="Rhea" id="RHEA:14801"/>
        <dbReference type="ChEBI" id="CHEBI:30616"/>
        <dbReference type="ChEBI" id="CHEBI:57604"/>
        <dbReference type="ChEBI" id="CHEBI:58272"/>
        <dbReference type="ChEBI" id="CHEBI:456216"/>
        <dbReference type="EC" id="2.7.2.3"/>
    </reaction>
</comment>
<comment type="pathway">
    <text evidence="1">Carbohydrate degradation; glycolysis; pyruvate from D-glyceraldehyde 3-phosphate: step 2/5.</text>
</comment>
<comment type="subunit">
    <text evidence="1">Monomer.</text>
</comment>
<comment type="subcellular location">
    <subcellularLocation>
        <location evidence="1">Cytoplasm</location>
    </subcellularLocation>
</comment>
<comment type="similarity">
    <text evidence="1">Belongs to the phosphoglycerate kinase family.</text>
</comment>
<name>PGK_TREPS</name>
<feature type="chain" id="PRO_1000096389" description="Phosphoglycerate kinase">
    <location>
        <begin position="1"/>
        <end position="419"/>
    </location>
</feature>
<feature type="binding site" evidence="1">
    <location>
        <begin position="21"/>
        <end position="23"/>
    </location>
    <ligand>
        <name>substrate</name>
    </ligand>
</feature>
<feature type="binding site" evidence="1">
    <location>
        <position position="36"/>
    </location>
    <ligand>
        <name>substrate</name>
    </ligand>
</feature>
<feature type="binding site" evidence="1">
    <location>
        <begin position="60"/>
        <end position="63"/>
    </location>
    <ligand>
        <name>substrate</name>
    </ligand>
</feature>
<feature type="binding site" evidence="1">
    <location>
        <position position="137"/>
    </location>
    <ligand>
        <name>substrate</name>
    </ligand>
</feature>
<feature type="binding site" evidence="1">
    <location>
        <position position="174"/>
    </location>
    <ligand>
        <name>substrate</name>
    </ligand>
</feature>
<feature type="binding site" evidence="1">
    <location>
        <position position="225"/>
    </location>
    <ligand>
        <name>ATP</name>
        <dbReference type="ChEBI" id="CHEBI:30616"/>
    </ligand>
</feature>
<feature type="binding site" evidence="1">
    <location>
        <position position="316"/>
    </location>
    <ligand>
        <name>ATP</name>
        <dbReference type="ChEBI" id="CHEBI:30616"/>
    </ligand>
</feature>
<feature type="binding site" evidence="1">
    <location>
        <position position="347"/>
    </location>
    <ligand>
        <name>ATP</name>
        <dbReference type="ChEBI" id="CHEBI:30616"/>
    </ligand>
</feature>
<feature type="binding site" evidence="1">
    <location>
        <begin position="376"/>
        <end position="379"/>
    </location>
    <ligand>
        <name>ATP</name>
        <dbReference type="ChEBI" id="CHEBI:30616"/>
    </ligand>
</feature>